<keyword id="KW-0050">Antiport</keyword>
<keyword id="KW-0333">Golgi apparatus</keyword>
<keyword id="KW-0472">Membrane</keyword>
<keyword id="KW-1185">Reference proteome</keyword>
<keyword id="KW-0762">Sugar transport</keyword>
<keyword id="KW-0812">Transmembrane</keyword>
<keyword id="KW-1133">Transmembrane helix</keyword>
<keyword id="KW-0813">Transport</keyword>
<gene>
    <name type="primary">Slc35a3</name>
</gene>
<sequence length="326" mass="35976">MSANLKYLSLGILVFQTTSLVLTMRYSRTLKEEGPRYLSSTAVVVAEFLKIMACIFLVYKDSKCSVRALNRVLHDEILNKPMETLKLAIPSGIYTLQNNLLYVALSNLDAATYQVTYQLKILTTALFSVSMLGKKLGVYQWLSLVILMAGVAFVQWPSDSQELNSKDLSTGSQFVGLMAVLTACFSSGFAGVYFEKILKETKQSVWIRNIQLGFFGSIFGLMGVYVYDGELVSKNGFFQGYNQLTWIVVALQALGGLVIAAVIKYADNILKGFATSLSIILSTIISYFWLQDFVPTSVFFLGAILVIAATFLYGYDPKPAGNPTKA</sequence>
<name>S35A3_MOUSE</name>
<accession>Q8R1T4</accession>
<accession>Q8BRW7</accession>
<proteinExistence type="evidence at protein level"/>
<feature type="chain" id="PRO_0000213358" description="UDP-N-acetylglucosamine transporter">
    <location>
        <begin position="1"/>
        <end position="326"/>
    </location>
</feature>
<feature type="transmembrane region" description="Helical" evidence="2">
    <location>
        <begin position="4"/>
        <end position="24"/>
    </location>
</feature>
<feature type="transmembrane region" description="Helical" evidence="2">
    <location>
        <begin position="38"/>
        <end position="58"/>
    </location>
</feature>
<feature type="transmembrane region" description="Helical" evidence="2">
    <location>
        <begin position="136"/>
        <end position="156"/>
    </location>
</feature>
<feature type="transmembrane region" description="Helical" evidence="2">
    <location>
        <begin position="174"/>
        <end position="194"/>
    </location>
</feature>
<feature type="transmembrane region" description="Helical" evidence="2">
    <location>
        <begin position="212"/>
        <end position="232"/>
    </location>
</feature>
<feature type="transmembrane region" description="Helical" evidence="2">
    <location>
        <begin position="243"/>
        <end position="263"/>
    </location>
</feature>
<feature type="transmembrane region" description="Helical" evidence="2">
    <location>
        <begin position="269"/>
        <end position="289"/>
    </location>
</feature>
<feature type="transmembrane region" description="Helical" evidence="2">
    <location>
        <begin position="293"/>
        <end position="313"/>
    </location>
</feature>
<feature type="mutagenesis site" description="Severe impairment of UDP-GlcNAc transport activity. Does not affect membrane localization." evidence="3">
    <original>A</original>
    <variation>C</variation>
    <location>
        <position position="42"/>
    </location>
</feature>
<feature type="mutagenesis site" description="Severe impairment of UDP-GlcNAc transport activity." evidence="3">
    <original>A</original>
    <variation>G</variation>
    <location>
        <position position="42"/>
    </location>
</feature>
<feature type="mutagenesis site" description="Does not affect UDP-GlcNAc transport activity." evidence="3">
    <original>A</original>
    <variation>V</variation>
    <location>
        <position position="42"/>
    </location>
</feature>
<feature type="mutagenesis site" description="Increases UDP-GlcNAc transport activity." evidence="3">
    <original>V</original>
    <variation>A</variation>
    <variation>L</variation>
    <variation>V</variation>
    <location>
        <position position="44"/>
    </location>
</feature>
<feature type="mutagenesis site" description="Severe impairment of UDP-GlcNAc transport activity. Does not affect membrane localization." evidence="3">
    <original>V</original>
    <variation>C</variation>
    <location>
        <position position="44"/>
    </location>
</feature>
<feature type="mutagenesis site" description="Abolishes protein expression." evidence="3">
    <original>E</original>
    <variation>A</variation>
    <location>
        <position position="47"/>
    </location>
</feature>
<feature type="mutagenesis site" description="Severe impairment of UDP-GlcNAc transport activity. Does not affect membrane localization." evidence="3">
    <original>E</original>
    <variation>C</variation>
    <location>
        <position position="47"/>
    </location>
</feature>
<feature type="mutagenesis site" description="Decreases UDP-GlcNAc transport activity." evidence="3">
    <original>E</original>
    <variation>D</variation>
    <location>
        <position position="47"/>
    </location>
</feature>
<feature type="mutagenesis site" description="Completely abolishes the biosynthesis of GlcNAc glycoconjugates." evidence="3">
    <original>E</original>
    <variation>Q</variation>
    <location>
        <position position="47"/>
    </location>
</feature>
<feature type="mutagenesis site" description="Almost completely inactive UDP-GlcNAc transport activity. Does not affect membrane localization." evidence="3">
    <original>K</original>
    <variation>C</variation>
    <location>
        <position position="50"/>
    </location>
</feature>
<feature type="mutagenesis site" description="Abolishes protein expression." evidence="3">
    <original>K</original>
    <variation>H</variation>
    <location>
        <position position="50"/>
    </location>
</feature>
<feature type="mutagenesis site" description="Almost completely inactive UDP-GlcNAc transport activity." evidence="3">
    <original>K</original>
    <variation>R</variation>
    <location>
        <position position="50"/>
    </location>
</feature>
<feature type="mutagenesis site" description="Severe impairment of UDP-GlcNAc transport activity." evidence="3">
    <original>K</original>
    <variation>R</variation>
    <location>
        <position position="50"/>
    </location>
</feature>
<feature type="mutagenesis site" description="Decreases UDP-GlcNAc transport activity." evidence="3">
    <original>V</original>
    <variation>F</variation>
    <location>
        <position position="180"/>
    </location>
</feature>
<feature type="sequence conflict" description="In Ref. 2; BAC30858." evidence="4" ref="2">
    <original>N</original>
    <variation>D</variation>
    <location>
        <position position="209"/>
    </location>
</feature>
<comment type="function">
    <text evidence="1 3">Transports diphosphate-N-acetylglucosamine (UDP-GlcNAc) from the cytosol into the lumen of the Golgi apparatus, functioning as an antiporter that exchanges UDP-N-acetyl-alpha-D-glucosamine for UMP (PubMed:31118275). May supply UDP-GlcNAc as substrate for Golgi-resident glycosyltransferases that generate highly branched, multiantennary complex N-glycans and keratan sulfate (By similarity). However, the exact role of SLC35A3 still needs to be elucidated, it could be a member of a catalytically more efficient multiprotein complex rather than function independently as a single transporter (By similarity).</text>
</comment>
<comment type="catalytic activity">
    <reaction evidence="3">
        <text>UMP(out) + UDP-N-acetyl-alpha-D-glucosamine(in) = UMP(in) + UDP-N-acetyl-alpha-D-glucosamine(out)</text>
        <dbReference type="Rhea" id="RHEA:72695"/>
        <dbReference type="ChEBI" id="CHEBI:57705"/>
        <dbReference type="ChEBI" id="CHEBI:57865"/>
    </reaction>
</comment>
<comment type="biophysicochemical properties">
    <kinetics>
        <KM evidence="3">22 uM for UDP-GlcNAc</KM>
    </kinetics>
</comment>
<comment type="subunit">
    <text evidence="1">Interacts with SLC35A2; the interaction is reduced in the presence of SLC35A4. Found in a complex with SLC35A2 and SLC35A4. Interacts with MGAT4B.</text>
</comment>
<comment type="subcellular location">
    <subcellularLocation>
        <location evidence="1">Golgi apparatus membrane</location>
        <topology evidence="2">Multi-pass membrane protein</topology>
    </subcellularLocation>
</comment>
<comment type="PTM">
    <text evidence="1">O-Glcnacylation regulates the stability of SLC35A3 and the specific complex formation with MGAT4B.</text>
</comment>
<comment type="similarity">
    <text evidence="4">Belongs to the nucleotide-sugar transporter family. SLC35A subfamily.</text>
</comment>
<evidence type="ECO:0000250" key="1">
    <source>
        <dbReference type="UniProtKB" id="Q9Y2D2"/>
    </source>
</evidence>
<evidence type="ECO:0000255" key="2"/>
<evidence type="ECO:0000269" key="3">
    <source>
    </source>
</evidence>
<evidence type="ECO:0000305" key="4"/>
<protein>
    <recommendedName>
        <fullName>UDP-N-acetylglucosamine transporter</fullName>
    </recommendedName>
    <alternativeName>
        <fullName>Golgi UDP-GlcNAc transporter</fullName>
    </alternativeName>
    <alternativeName>
        <fullName>Solute carrier family 35 member A3</fullName>
    </alternativeName>
</protein>
<organism>
    <name type="scientific">Mus musculus</name>
    <name type="common">Mouse</name>
    <dbReference type="NCBI Taxonomy" id="10090"/>
    <lineage>
        <taxon>Eukaryota</taxon>
        <taxon>Metazoa</taxon>
        <taxon>Chordata</taxon>
        <taxon>Craniata</taxon>
        <taxon>Vertebrata</taxon>
        <taxon>Euteleostomi</taxon>
        <taxon>Mammalia</taxon>
        <taxon>Eutheria</taxon>
        <taxon>Euarchontoglires</taxon>
        <taxon>Glires</taxon>
        <taxon>Rodentia</taxon>
        <taxon>Myomorpha</taxon>
        <taxon>Muroidea</taxon>
        <taxon>Muridae</taxon>
        <taxon>Murinae</taxon>
        <taxon>Mus</taxon>
        <taxon>Mus</taxon>
    </lineage>
</organism>
<reference key="1">
    <citation type="journal article" date="2004" name="Genome Res.">
        <title>The status, quality, and expansion of the NIH full-length cDNA project: the Mammalian Gene Collection (MGC).</title>
        <authorList>
            <consortium name="The MGC Project Team"/>
        </authorList>
    </citation>
    <scope>NUCLEOTIDE SEQUENCE [LARGE SCALE MRNA]</scope>
    <source>
        <strain>FVB/N</strain>
        <tissue>Mammary tumor</tissue>
    </source>
</reference>
<reference key="2">
    <citation type="journal article" date="2005" name="Science">
        <title>The transcriptional landscape of the mammalian genome.</title>
        <authorList>
            <person name="Carninci P."/>
            <person name="Kasukawa T."/>
            <person name="Katayama S."/>
            <person name="Gough J."/>
            <person name="Frith M.C."/>
            <person name="Maeda N."/>
            <person name="Oyama R."/>
            <person name="Ravasi T."/>
            <person name="Lenhard B."/>
            <person name="Wells C."/>
            <person name="Kodzius R."/>
            <person name="Shimokawa K."/>
            <person name="Bajic V.B."/>
            <person name="Brenner S.E."/>
            <person name="Batalov S."/>
            <person name="Forrest A.R."/>
            <person name="Zavolan M."/>
            <person name="Davis M.J."/>
            <person name="Wilming L.G."/>
            <person name="Aidinis V."/>
            <person name="Allen J.E."/>
            <person name="Ambesi-Impiombato A."/>
            <person name="Apweiler R."/>
            <person name="Aturaliya R.N."/>
            <person name="Bailey T.L."/>
            <person name="Bansal M."/>
            <person name="Baxter L."/>
            <person name="Beisel K.W."/>
            <person name="Bersano T."/>
            <person name="Bono H."/>
            <person name="Chalk A.M."/>
            <person name="Chiu K.P."/>
            <person name="Choudhary V."/>
            <person name="Christoffels A."/>
            <person name="Clutterbuck D.R."/>
            <person name="Crowe M.L."/>
            <person name="Dalla E."/>
            <person name="Dalrymple B.P."/>
            <person name="de Bono B."/>
            <person name="Della Gatta G."/>
            <person name="di Bernardo D."/>
            <person name="Down T."/>
            <person name="Engstrom P."/>
            <person name="Fagiolini M."/>
            <person name="Faulkner G."/>
            <person name="Fletcher C.F."/>
            <person name="Fukushima T."/>
            <person name="Furuno M."/>
            <person name="Futaki S."/>
            <person name="Gariboldi M."/>
            <person name="Georgii-Hemming P."/>
            <person name="Gingeras T.R."/>
            <person name="Gojobori T."/>
            <person name="Green R.E."/>
            <person name="Gustincich S."/>
            <person name="Harbers M."/>
            <person name="Hayashi Y."/>
            <person name="Hensch T.K."/>
            <person name="Hirokawa N."/>
            <person name="Hill D."/>
            <person name="Huminiecki L."/>
            <person name="Iacono M."/>
            <person name="Ikeo K."/>
            <person name="Iwama A."/>
            <person name="Ishikawa T."/>
            <person name="Jakt M."/>
            <person name="Kanapin A."/>
            <person name="Katoh M."/>
            <person name="Kawasawa Y."/>
            <person name="Kelso J."/>
            <person name="Kitamura H."/>
            <person name="Kitano H."/>
            <person name="Kollias G."/>
            <person name="Krishnan S.P."/>
            <person name="Kruger A."/>
            <person name="Kummerfeld S.K."/>
            <person name="Kurochkin I.V."/>
            <person name="Lareau L.F."/>
            <person name="Lazarevic D."/>
            <person name="Lipovich L."/>
            <person name="Liu J."/>
            <person name="Liuni S."/>
            <person name="McWilliam S."/>
            <person name="Madan Babu M."/>
            <person name="Madera M."/>
            <person name="Marchionni L."/>
            <person name="Matsuda H."/>
            <person name="Matsuzawa S."/>
            <person name="Miki H."/>
            <person name="Mignone F."/>
            <person name="Miyake S."/>
            <person name="Morris K."/>
            <person name="Mottagui-Tabar S."/>
            <person name="Mulder N."/>
            <person name="Nakano N."/>
            <person name="Nakauchi H."/>
            <person name="Ng P."/>
            <person name="Nilsson R."/>
            <person name="Nishiguchi S."/>
            <person name="Nishikawa S."/>
            <person name="Nori F."/>
            <person name="Ohara O."/>
            <person name="Okazaki Y."/>
            <person name="Orlando V."/>
            <person name="Pang K.C."/>
            <person name="Pavan W.J."/>
            <person name="Pavesi G."/>
            <person name="Pesole G."/>
            <person name="Petrovsky N."/>
            <person name="Piazza S."/>
            <person name="Reed J."/>
            <person name="Reid J.F."/>
            <person name="Ring B.Z."/>
            <person name="Ringwald M."/>
            <person name="Rost B."/>
            <person name="Ruan Y."/>
            <person name="Salzberg S.L."/>
            <person name="Sandelin A."/>
            <person name="Schneider C."/>
            <person name="Schoenbach C."/>
            <person name="Sekiguchi K."/>
            <person name="Semple C.A."/>
            <person name="Seno S."/>
            <person name="Sessa L."/>
            <person name="Sheng Y."/>
            <person name="Shibata Y."/>
            <person name="Shimada H."/>
            <person name="Shimada K."/>
            <person name="Silva D."/>
            <person name="Sinclair B."/>
            <person name="Sperling S."/>
            <person name="Stupka E."/>
            <person name="Sugiura K."/>
            <person name="Sultana R."/>
            <person name="Takenaka Y."/>
            <person name="Taki K."/>
            <person name="Tammoja K."/>
            <person name="Tan S.L."/>
            <person name="Tang S."/>
            <person name="Taylor M.S."/>
            <person name="Tegner J."/>
            <person name="Teichmann S.A."/>
            <person name="Ueda H.R."/>
            <person name="van Nimwegen E."/>
            <person name="Verardo R."/>
            <person name="Wei C.L."/>
            <person name="Yagi K."/>
            <person name="Yamanishi H."/>
            <person name="Zabarovsky E."/>
            <person name="Zhu S."/>
            <person name="Zimmer A."/>
            <person name="Hide W."/>
            <person name="Bult C."/>
            <person name="Grimmond S.M."/>
            <person name="Teasdale R.D."/>
            <person name="Liu E.T."/>
            <person name="Brusic V."/>
            <person name="Quackenbush J."/>
            <person name="Wahlestedt C."/>
            <person name="Mattick J.S."/>
            <person name="Hume D.A."/>
            <person name="Kai C."/>
            <person name="Sasaki D."/>
            <person name="Tomaru Y."/>
            <person name="Fukuda S."/>
            <person name="Kanamori-Katayama M."/>
            <person name="Suzuki M."/>
            <person name="Aoki J."/>
            <person name="Arakawa T."/>
            <person name="Iida J."/>
            <person name="Imamura K."/>
            <person name="Itoh M."/>
            <person name="Kato T."/>
            <person name="Kawaji H."/>
            <person name="Kawagashira N."/>
            <person name="Kawashima T."/>
            <person name="Kojima M."/>
            <person name="Kondo S."/>
            <person name="Konno H."/>
            <person name="Nakano K."/>
            <person name="Ninomiya N."/>
            <person name="Nishio T."/>
            <person name="Okada M."/>
            <person name="Plessy C."/>
            <person name="Shibata K."/>
            <person name="Shiraki T."/>
            <person name="Suzuki S."/>
            <person name="Tagami M."/>
            <person name="Waki K."/>
            <person name="Watahiki A."/>
            <person name="Okamura-Oho Y."/>
            <person name="Suzuki H."/>
            <person name="Kawai J."/>
            <person name="Hayashizaki Y."/>
        </authorList>
    </citation>
    <scope>NUCLEOTIDE SEQUENCE [LARGE SCALE MRNA]</scope>
    <source>
        <strain>C57BL/6J</strain>
        <tissue>Aorta</tissue>
        <tissue>Embryo</tissue>
        <tissue>Head</tissue>
    </source>
</reference>
<reference key="3">
    <citation type="journal article" date="2019" name="J. Biol. Chem.">
        <title>Conserved Glu-47 and Lys-50 residues are critical for UDP-N-acetylglucosamine/UMP antiport activity of the mouse Golgi-associated transporter Slc35a3.</title>
        <authorList>
            <person name="Toscanini M.A."/>
            <person name="Favarolo M.B."/>
            <person name="Gonzalez Flecha F.L."/>
            <person name="Ebert B."/>
            <person name="Rautengarten C."/>
            <person name="Bredeston L.M."/>
        </authorList>
    </citation>
    <scope>FUNCTION</scope>
    <scope>TRANSPORTER ACTIVITY</scope>
    <scope>BIOPHYSICOCHEMICAL PROPERTIES</scope>
    <scope>MUTAGENESIS OF ALA-42; VAL-44; GLU-47; LYS-50 AND VAL-180</scope>
</reference>
<dbReference type="EMBL" id="BC024110">
    <property type="protein sequence ID" value="AAH24110.1"/>
    <property type="molecule type" value="mRNA"/>
</dbReference>
<dbReference type="EMBL" id="AK029398">
    <property type="protein sequence ID" value="BAC26434.1"/>
    <property type="molecule type" value="mRNA"/>
</dbReference>
<dbReference type="EMBL" id="AK041195">
    <property type="protein sequence ID" value="BAC30858.1"/>
    <property type="molecule type" value="mRNA"/>
</dbReference>
<dbReference type="EMBL" id="AK049484">
    <property type="protein sequence ID" value="BAC33773.1"/>
    <property type="molecule type" value="mRNA"/>
</dbReference>
<dbReference type="CCDS" id="CCDS17791.1"/>
<dbReference type="RefSeq" id="NP_001349303.1">
    <property type="nucleotide sequence ID" value="NM_001362374.2"/>
</dbReference>
<dbReference type="RefSeq" id="NP_001391627.1">
    <property type="nucleotide sequence ID" value="NM_001404698.1"/>
</dbReference>
<dbReference type="RefSeq" id="NP_659151.1">
    <property type="nucleotide sequence ID" value="NM_144902.5"/>
</dbReference>
<dbReference type="RefSeq" id="XP_006501489.1">
    <property type="nucleotide sequence ID" value="XM_006501426.3"/>
</dbReference>
<dbReference type="SMR" id="Q8R1T4"/>
<dbReference type="FunCoup" id="Q8R1T4">
    <property type="interactions" value="763"/>
</dbReference>
<dbReference type="STRING" id="10090.ENSMUSP00000029569"/>
<dbReference type="GlyGen" id="Q8R1T4">
    <property type="glycosylation" value="1 site, 1 O-linked glycan (1 site)"/>
</dbReference>
<dbReference type="iPTMnet" id="Q8R1T4"/>
<dbReference type="PhosphoSitePlus" id="Q8R1T4"/>
<dbReference type="SwissPalm" id="Q8R1T4"/>
<dbReference type="jPOST" id="Q8R1T4"/>
<dbReference type="PaxDb" id="10090-ENSMUSP00000029569"/>
<dbReference type="ProteomicsDB" id="256880"/>
<dbReference type="Antibodypedia" id="19975">
    <property type="antibodies" value="58 antibodies from 19 providers"/>
</dbReference>
<dbReference type="DNASU" id="229782"/>
<dbReference type="Ensembl" id="ENSMUST00000029569.9">
    <property type="protein sequence ID" value="ENSMUSP00000029569.3"/>
    <property type="gene ID" value="ENSMUSG00000027957.14"/>
</dbReference>
<dbReference type="Ensembl" id="ENSMUST00000120120.8">
    <property type="protein sequence ID" value="ENSMUSP00000112674.2"/>
    <property type="gene ID" value="ENSMUSG00000027957.14"/>
</dbReference>
<dbReference type="GeneID" id="229782"/>
<dbReference type="KEGG" id="mmu:229782"/>
<dbReference type="UCSC" id="uc008rcp.1">
    <property type="organism name" value="mouse"/>
</dbReference>
<dbReference type="AGR" id="MGI:1917648"/>
<dbReference type="CTD" id="23443"/>
<dbReference type="MGI" id="MGI:1917648">
    <property type="gene designation" value="Slc35a3"/>
</dbReference>
<dbReference type="VEuPathDB" id="HostDB:ENSMUSG00000027957"/>
<dbReference type="eggNOG" id="KOG2234">
    <property type="taxonomic scope" value="Eukaryota"/>
</dbReference>
<dbReference type="GeneTree" id="ENSGT00950000182827"/>
<dbReference type="HOGENOM" id="CLU_024645_1_0_1"/>
<dbReference type="InParanoid" id="Q8R1T4"/>
<dbReference type="OMA" id="AIMYVIQ"/>
<dbReference type="OrthoDB" id="408493at2759"/>
<dbReference type="PhylomeDB" id="Q8R1T4"/>
<dbReference type="TreeFam" id="TF315345"/>
<dbReference type="Reactome" id="R-MMU-727802">
    <property type="pathway name" value="Transport of nucleotide sugars"/>
</dbReference>
<dbReference type="BioGRID-ORCS" id="229782">
    <property type="hits" value="5 hits in 77 CRISPR screens"/>
</dbReference>
<dbReference type="ChiTaRS" id="Slc35a3">
    <property type="organism name" value="mouse"/>
</dbReference>
<dbReference type="PRO" id="PR:Q8R1T4"/>
<dbReference type="Proteomes" id="UP000000589">
    <property type="component" value="Chromosome 3"/>
</dbReference>
<dbReference type="RNAct" id="Q8R1T4">
    <property type="molecule type" value="protein"/>
</dbReference>
<dbReference type="Bgee" id="ENSMUSG00000027957">
    <property type="expression patterns" value="Expressed in left colon and 231 other cell types or tissues"/>
</dbReference>
<dbReference type="ExpressionAtlas" id="Q8R1T4">
    <property type="expression patterns" value="baseline and differential"/>
</dbReference>
<dbReference type="GO" id="GO:0000139">
    <property type="term" value="C:Golgi membrane"/>
    <property type="evidence" value="ECO:0000250"/>
    <property type="project" value="UniProtKB"/>
</dbReference>
<dbReference type="GO" id="GO:0015297">
    <property type="term" value="F:antiporter activity"/>
    <property type="evidence" value="ECO:0007669"/>
    <property type="project" value="UniProtKB-KW"/>
</dbReference>
<dbReference type="GO" id="GO:0005459">
    <property type="term" value="F:UDP-galactose transmembrane transporter activity"/>
    <property type="evidence" value="ECO:0000314"/>
    <property type="project" value="UniProtKB"/>
</dbReference>
<dbReference type="GO" id="GO:1990569">
    <property type="term" value="P:UDP-N-acetylglucosamine transmembrane transport"/>
    <property type="evidence" value="ECO:0000314"/>
    <property type="project" value="UniProtKB"/>
</dbReference>
<dbReference type="FunFam" id="1.10.3730.20:FF:000037">
    <property type="entry name" value="Nucleotide Sugar TransPorter family"/>
    <property type="match status" value="1"/>
</dbReference>
<dbReference type="InterPro" id="IPR007271">
    <property type="entry name" value="Nuc_sug_transpt"/>
</dbReference>
<dbReference type="NCBIfam" id="TIGR00803">
    <property type="entry name" value="nst"/>
    <property type="match status" value="1"/>
</dbReference>
<dbReference type="PANTHER" id="PTHR10231">
    <property type="entry name" value="NUCLEOTIDE-SUGAR TRANSMEMBRANE TRANSPORTER"/>
    <property type="match status" value="1"/>
</dbReference>
<dbReference type="Pfam" id="PF04142">
    <property type="entry name" value="Nuc_sug_transp"/>
    <property type="match status" value="1"/>
</dbReference>
<dbReference type="PIRSF" id="PIRSF005799">
    <property type="entry name" value="UDP-gal_transpt"/>
    <property type="match status" value="1"/>
</dbReference>
<dbReference type="SUPFAM" id="SSF103481">
    <property type="entry name" value="Multidrug resistance efflux transporter EmrE"/>
    <property type="match status" value="1"/>
</dbReference>